<evidence type="ECO:0000255" key="1">
    <source>
        <dbReference type="HAMAP-Rule" id="MF_00274"/>
    </source>
</evidence>
<gene>
    <name type="ordered locus">SPP_1108</name>
</gene>
<keyword id="KW-0963">Cytoplasm</keyword>
<keyword id="KW-0238">DNA-binding</keyword>
<comment type="function">
    <text evidence="1">Binds to DNA and alters its conformation. May be involved in regulation of gene expression, nucleoid organization and DNA protection.</text>
</comment>
<comment type="subunit">
    <text evidence="1">Homodimer.</text>
</comment>
<comment type="subcellular location">
    <subcellularLocation>
        <location evidence="1">Cytoplasm</location>
        <location evidence="1">Nucleoid</location>
    </subcellularLocation>
</comment>
<comment type="similarity">
    <text evidence="1">Belongs to the YbaB/EbfC family.</text>
</comment>
<organism>
    <name type="scientific">Streptococcus pneumoniae (strain P1031)</name>
    <dbReference type="NCBI Taxonomy" id="488223"/>
    <lineage>
        <taxon>Bacteria</taxon>
        <taxon>Bacillati</taxon>
        <taxon>Bacillota</taxon>
        <taxon>Bacilli</taxon>
        <taxon>Lactobacillales</taxon>
        <taxon>Streptococcaceae</taxon>
        <taxon>Streptococcus</taxon>
    </lineage>
</organism>
<feature type="chain" id="PRO_1000197681" description="Nucleoid-associated protein SPP_1108">
    <location>
        <begin position="1"/>
        <end position="99"/>
    </location>
</feature>
<proteinExistence type="inferred from homology"/>
<sequence length="99" mass="10936">MMNMQNMMRQAQKLQKQMEQSQAELAAMQFVGKSAQDLVQATLTGDKKVVSIDFNPAVVDPEDLETLSDMTVQAINSALEQIDETTKKKLGAFAGKLPF</sequence>
<dbReference type="EMBL" id="CP000920">
    <property type="protein sequence ID" value="ACO20831.1"/>
    <property type="molecule type" value="Genomic_DNA"/>
</dbReference>
<dbReference type="RefSeq" id="WP_000981526.1">
    <property type="nucleotide sequence ID" value="NC_012467.1"/>
</dbReference>
<dbReference type="SMR" id="C1CKG7"/>
<dbReference type="KEGG" id="spp:SPP_1108"/>
<dbReference type="HOGENOM" id="CLU_140930_1_1_9"/>
<dbReference type="GO" id="GO:0043590">
    <property type="term" value="C:bacterial nucleoid"/>
    <property type="evidence" value="ECO:0007669"/>
    <property type="project" value="UniProtKB-UniRule"/>
</dbReference>
<dbReference type="GO" id="GO:0005829">
    <property type="term" value="C:cytosol"/>
    <property type="evidence" value="ECO:0007669"/>
    <property type="project" value="TreeGrafter"/>
</dbReference>
<dbReference type="GO" id="GO:0003677">
    <property type="term" value="F:DNA binding"/>
    <property type="evidence" value="ECO:0007669"/>
    <property type="project" value="UniProtKB-UniRule"/>
</dbReference>
<dbReference type="FunFam" id="3.30.1310.10:FF:000005">
    <property type="entry name" value="Nucleoid-associated protein SPAR113_1167"/>
    <property type="match status" value="1"/>
</dbReference>
<dbReference type="Gene3D" id="3.30.1310.10">
    <property type="entry name" value="Nucleoid-associated protein YbaB-like domain"/>
    <property type="match status" value="1"/>
</dbReference>
<dbReference type="HAMAP" id="MF_00274">
    <property type="entry name" value="DNA_YbaB_EbfC"/>
    <property type="match status" value="1"/>
</dbReference>
<dbReference type="InterPro" id="IPR036894">
    <property type="entry name" value="YbaB-like_sf"/>
</dbReference>
<dbReference type="InterPro" id="IPR004401">
    <property type="entry name" value="YbaB/EbfC"/>
</dbReference>
<dbReference type="NCBIfam" id="TIGR00103">
    <property type="entry name" value="DNA_YbaB_EbfC"/>
    <property type="match status" value="1"/>
</dbReference>
<dbReference type="PANTHER" id="PTHR33449">
    <property type="entry name" value="NUCLEOID-ASSOCIATED PROTEIN YBAB"/>
    <property type="match status" value="1"/>
</dbReference>
<dbReference type="PANTHER" id="PTHR33449:SF1">
    <property type="entry name" value="NUCLEOID-ASSOCIATED PROTEIN YBAB"/>
    <property type="match status" value="1"/>
</dbReference>
<dbReference type="Pfam" id="PF02575">
    <property type="entry name" value="YbaB_DNA_bd"/>
    <property type="match status" value="1"/>
</dbReference>
<dbReference type="PIRSF" id="PIRSF004555">
    <property type="entry name" value="UCP004555"/>
    <property type="match status" value="1"/>
</dbReference>
<dbReference type="SUPFAM" id="SSF82607">
    <property type="entry name" value="YbaB-like"/>
    <property type="match status" value="1"/>
</dbReference>
<protein>
    <recommendedName>
        <fullName evidence="1">Nucleoid-associated protein SPP_1108</fullName>
    </recommendedName>
</protein>
<accession>C1CKG7</accession>
<reference key="1">
    <citation type="journal article" date="2010" name="Genome Biol.">
        <title>Structure and dynamics of the pan-genome of Streptococcus pneumoniae and closely related species.</title>
        <authorList>
            <person name="Donati C."/>
            <person name="Hiller N.L."/>
            <person name="Tettelin H."/>
            <person name="Muzzi A."/>
            <person name="Croucher N.J."/>
            <person name="Angiuoli S.V."/>
            <person name="Oggioni M."/>
            <person name="Dunning Hotopp J.C."/>
            <person name="Hu F.Z."/>
            <person name="Riley D.R."/>
            <person name="Covacci A."/>
            <person name="Mitchell T.J."/>
            <person name="Bentley S.D."/>
            <person name="Kilian M."/>
            <person name="Ehrlich G.D."/>
            <person name="Rappuoli R."/>
            <person name="Moxon E.R."/>
            <person name="Masignani V."/>
        </authorList>
    </citation>
    <scope>NUCLEOTIDE SEQUENCE [LARGE SCALE GENOMIC DNA]</scope>
    <source>
        <strain>P1031</strain>
    </source>
</reference>
<name>Y1108_STRZP</name>